<evidence type="ECO:0000255" key="1">
    <source>
        <dbReference type="HAMAP-Rule" id="MF_00438"/>
    </source>
</evidence>
<evidence type="ECO:0000256" key="2">
    <source>
        <dbReference type="SAM" id="MobiDB-lite"/>
    </source>
</evidence>
<evidence type="ECO:0000305" key="3"/>
<reference key="1">
    <citation type="journal article" date="2003" name="Proc. Natl. Acad. Sci. U.S.A.">
        <title>Genome sequence of the cyanobacterium Prochlorococcus marinus SS120, a nearly minimal oxyphototrophic genome.</title>
        <authorList>
            <person name="Dufresne A."/>
            <person name="Salanoubat M."/>
            <person name="Partensky F."/>
            <person name="Artiguenave F."/>
            <person name="Axmann I.M."/>
            <person name="Barbe V."/>
            <person name="Duprat S."/>
            <person name="Galperin M.Y."/>
            <person name="Koonin E.V."/>
            <person name="Le Gall F."/>
            <person name="Makarova K.S."/>
            <person name="Ostrowski M."/>
            <person name="Oztas S."/>
            <person name="Robert C."/>
            <person name="Rogozin I.B."/>
            <person name="Scanlan D.J."/>
            <person name="Tandeau de Marsac N."/>
            <person name="Weissenbach J."/>
            <person name="Wincker P."/>
            <person name="Wolf Y.I."/>
            <person name="Hess W.R."/>
        </authorList>
    </citation>
    <scope>NUCLEOTIDE SEQUENCE [LARGE SCALE GENOMIC DNA]</scope>
    <source>
        <strain>SARG / CCMP1375 / SS120</strain>
    </source>
</reference>
<accession>Q7VDL9</accession>
<keyword id="KW-0472">Membrane</keyword>
<keyword id="KW-0602">Photosynthesis</keyword>
<keyword id="KW-0604">Photosystem II</keyword>
<keyword id="KW-0674">Reaction center</keyword>
<keyword id="KW-1185">Reference proteome</keyword>
<keyword id="KW-0793">Thylakoid</keyword>
<keyword id="KW-0812">Transmembrane</keyword>
<keyword id="KW-1133">Transmembrane helix</keyword>
<gene>
    <name evidence="1" type="primary">psbM</name>
    <name type="ordered locus">Pro_0357</name>
</gene>
<organism>
    <name type="scientific">Prochlorococcus marinus (strain SARG / CCMP1375 / SS120)</name>
    <dbReference type="NCBI Taxonomy" id="167539"/>
    <lineage>
        <taxon>Bacteria</taxon>
        <taxon>Bacillati</taxon>
        <taxon>Cyanobacteriota</taxon>
        <taxon>Cyanophyceae</taxon>
        <taxon>Synechococcales</taxon>
        <taxon>Prochlorococcaceae</taxon>
        <taxon>Prochlorococcus</taxon>
    </lineage>
</organism>
<dbReference type="EMBL" id="AE017126">
    <property type="protein sequence ID" value="AAP99403.1"/>
    <property type="molecule type" value="Genomic_DNA"/>
</dbReference>
<dbReference type="RefSeq" id="NP_874751.1">
    <property type="nucleotide sequence ID" value="NC_005042.1"/>
</dbReference>
<dbReference type="RefSeq" id="WP_011124512.1">
    <property type="nucleotide sequence ID" value="NC_005042.1"/>
</dbReference>
<dbReference type="SMR" id="Q7VDL9"/>
<dbReference type="STRING" id="167539.Pro_0357"/>
<dbReference type="EnsemblBacteria" id="AAP99403">
    <property type="protein sequence ID" value="AAP99403"/>
    <property type="gene ID" value="Pro_0357"/>
</dbReference>
<dbReference type="KEGG" id="pma:Pro_0357"/>
<dbReference type="PATRIC" id="fig|167539.5.peg.365"/>
<dbReference type="HOGENOM" id="CLU_215415_0_0_3"/>
<dbReference type="Proteomes" id="UP000001420">
    <property type="component" value="Chromosome"/>
</dbReference>
<dbReference type="GO" id="GO:0009523">
    <property type="term" value="C:photosystem II"/>
    <property type="evidence" value="ECO:0007669"/>
    <property type="project" value="UniProtKB-KW"/>
</dbReference>
<dbReference type="GO" id="GO:0031676">
    <property type="term" value="C:plasma membrane-derived thylakoid membrane"/>
    <property type="evidence" value="ECO:0007669"/>
    <property type="project" value="UniProtKB-SubCell"/>
</dbReference>
<dbReference type="GO" id="GO:0019684">
    <property type="term" value="P:photosynthesis, light reaction"/>
    <property type="evidence" value="ECO:0007669"/>
    <property type="project" value="InterPro"/>
</dbReference>
<dbReference type="HAMAP" id="MF_00438">
    <property type="entry name" value="PSII_PsbM"/>
    <property type="match status" value="1"/>
</dbReference>
<dbReference type="InterPro" id="IPR007826">
    <property type="entry name" value="PSII_PsbM"/>
</dbReference>
<dbReference type="InterPro" id="IPR037269">
    <property type="entry name" value="PSII_PsbM_sf"/>
</dbReference>
<dbReference type="NCBIfam" id="NF010694">
    <property type="entry name" value="PRK14094.1"/>
    <property type="match status" value="1"/>
</dbReference>
<dbReference type="NCBIfam" id="TIGR03038">
    <property type="entry name" value="PS_II_psbM"/>
    <property type="match status" value="1"/>
</dbReference>
<dbReference type="Pfam" id="PF05151">
    <property type="entry name" value="PsbM"/>
    <property type="match status" value="1"/>
</dbReference>
<dbReference type="SUPFAM" id="SSF161033">
    <property type="entry name" value="Photosystem II reaction center protein M, PsbM"/>
    <property type="match status" value="1"/>
</dbReference>
<proteinExistence type="inferred from homology"/>
<name>PSBM_PROMA</name>
<feature type="chain" id="PRO_0000217582" description="Photosystem II reaction center protein M">
    <location>
        <begin position="1"/>
        <end position="50"/>
    </location>
</feature>
<feature type="transmembrane region" description="Helical" evidence="1">
    <location>
        <begin position="7"/>
        <end position="27"/>
    </location>
</feature>
<feature type="region of interest" description="Disordered" evidence="2">
    <location>
        <begin position="31"/>
        <end position="50"/>
    </location>
</feature>
<protein>
    <recommendedName>
        <fullName evidence="1">Photosystem II reaction center protein M</fullName>
        <shortName evidence="1">PSII-M</shortName>
    </recommendedName>
</protein>
<sequence>METTNFGFIISLLFVGIPTIFLVGLYISTSDGEKSSFFSDSSKGKLGPKS</sequence>
<comment type="function">
    <text evidence="1">One of the components of the core complex of photosystem II (PSII). PSII is a light-driven water:plastoquinone oxidoreductase that uses light energy to abstract electrons from H(2)O, generating O(2) and a proton gradient subsequently used for ATP formation. It consists of a core antenna complex that captures photons, and an electron transfer chain that converts photonic excitation into a charge separation. This subunit is found at the monomer-monomer interface.</text>
</comment>
<comment type="subunit">
    <text evidence="3">PSII is composed of 1 copy each of membrane proteins PsbA, PsbB, PsbC, PsbD, PsbE, PsbF, PsbH, PsbI, PsbJ, PsbK, PsbL, PsbM, PsbT, PsbX, PsbY, Psb30/Ycf12, peripheral proteins PsbO, CyanoQ (PsbQ), PsbU, PsbV and a large number of cofactors. It forms dimeric complexes.</text>
</comment>
<comment type="subcellular location">
    <subcellularLocation>
        <location evidence="1">Cellular thylakoid membrane</location>
        <topology evidence="1">Single-pass membrane protein</topology>
    </subcellularLocation>
</comment>
<comment type="similarity">
    <text evidence="1">Belongs to the PsbM family.</text>
</comment>